<name>RS151_ARATH</name>
<proteinExistence type="evidence at transcript level"/>
<feature type="chain" id="PRO_0000130039" description="Small ribosomal subunit protein uS19u">
    <location>
        <begin position="1"/>
        <end position="152"/>
    </location>
</feature>
<feature type="sequence conflict" description="In Ref. 2; CAA63028." evidence="2" ref="2">
    <original>A</original>
    <variation>G</variation>
    <location>
        <position position="2"/>
    </location>
</feature>
<feature type="sequence conflict" description="In Ref. 2; CAA63028." evidence="2" ref="2">
    <original>V</original>
    <variation>L</variation>
    <location>
        <position position="93"/>
    </location>
</feature>
<organism>
    <name type="scientific">Arabidopsis thaliana</name>
    <name type="common">Mouse-ear cress</name>
    <dbReference type="NCBI Taxonomy" id="3702"/>
    <lineage>
        <taxon>Eukaryota</taxon>
        <taxon>Viridiplantae</taxon>
        <taxon>Streptophyta</taxon>
        <taxon>Embryophyta</taxon>
        <taxon>Tracheophyta</taxon>
        <taxon>Spermatophyta</taxon>
        <taxon>Magnoliopsida</taxon>
        <taxon>eudicotyledons</taxon>
        <taxon>Gunneridae</taxon>
        <taxon>Pentapetalae</taxon>
        <taxon>rosids</taxon>
        <taxon>malvids</taxon>
        <taxon>Brassicales</taxon>
        <taxon>Brassicaceae</taxon>
        <taxon>Camelineae</taxon>
        <taxon>Arabidopsis</taxon>
    </lineage>
</organism>
<dbReference type="EMBL" id="Z23161">
    <property type="protein sequence ID" value="CAA80679.1"/>
    <property type="molecule type" value="mRNA"/>
</dbReference>
<dbReference type="EMBL" id="Z23162">
    <property type="protein sequence ID" value="CAA80681.1"/>
    <property type="molecule type" value="Genomic_DNA"/>
</dbReference>
<dbReference type="EMBL" id="X91962">
    <property type="protein sequence ID" value="CAA63028.1"/>
    <property type="molecule type" value="mRNA"/>
</dbReference>
<dbReference type="EMBL" id="AC000104">
    <property type="protein sequence ID" value="AAB70449.1"/>
    <property type="molecule type" value="Genomic_DNA"/>
</dbReference>
<dbReference type="EMBL" id="CP002684">
    <property type="protein sequence ID" value="AEE27676.1"/>
    <property type="molecule type" value="Genomic_DNA"/>
</dbReference>
<dbReference type="EMBL" id="AY048221">
    <property type="protein sequence ID" value="AAK82484.1"/>
    <property type="molecule type" value="mRNA"/>
</dbReference>
<dbReference type="EMBL" id="AY091703">
    <property type="protein sequence ID" value="AAM10302.1"/>
    <property type="molecule type" value="mRNA"/>
</dbReference>
<dbReference type="EMBL" id="Z17791">
    <property type="protein sequence ID" value="CAA79070.1"/>
    <property type="molecule type" value="mRNA"/>
</dbReference>
<dbReference type="PIR" id="S43412">
    <property type="entry name" value="S43412"/>
</dbReference>
<dbReference type="PIR" id="S71259">
    <property type="entry name" value="S71259"/>
</dbReference>
<dbReference type="RefSeq" id="NP_171923.1">
    <molecule id="Q08112-1"/>
    <property type="nucleotide sequence ID" value="NM_100308.4"/>
</dbReference>
<dbReference type="SMR" id="Q08112"/>
<dbReference type="BioGRID" id="24799">
    <property type="interactions" value="92"/>
</dbReference>
<dbReference type="FunCoup" id="Q08112">
    <property type="interactions" value="3360"/>
</dbReference>
<dbReference type="IntAct" id="Q08112">
    <property type="interactions" value="1"/>
</dbReference>
<dbReference type="STRING" id="3702.Q08112"/>
<dbReference type="iPTMnet" id="Q08112"/>
<dbReference type="MetOSite" id="Q08112"/>
<dbReference type="PaxDb" id="3702-AT1G04270.1"/>
<dbReference type="EnsemblPlants" id="AT1G04270.1">
    <molecule id="Q08112-1"/>
    <property type="protein sequence ID" value="AT1G04270.1"/>
    <property type="gene ID" value="AT1G04270"/>
</dbReference>
<dbReference type="GeneID" id="839564"/>
<dbReference type="Gramene" id="AT1G04270.1">
    <molecule id="Q08112-1"/>
    <property type="protein sequence ID" value="AT1G04270.1"/>
    <property type="gene ID" value="AT1G04270"/>
</dbReference>
<dbReference type="KEGG" id="ath:AT1G04270"/>
<dbReference type="Araport" id="AT1G04270"/>
<dbReference type="TAIR" id="AT1G04270">
    <property type="gene designation" value="RPS15"/>
</dbReference>
<dbReference type="eggNOG" id="KOG0898">
    <property type="taxonomic scope" value="Eukaryota"/>
</dbReference>
<dbReference type="HOGENOM" id="CLU_097347_1_0_1"/>
<dbReference type="InParanoid" id="Q08112"/>
<dbReference type="OMA" id="MQPYSAC"/>
<dbReference type="OrthoDB" id="1072458at2759"/>
<dbReference type="PhylomeDB" id="Q08112"/>
<dbReference type="PRO" id="PR:Q08112"/>
<dbReference type="Proteomes" id="UP000006548">
    <property type="component" value="Chromosome 1"/>
</dbReference>
<dbReference type="ExpressionAtlas" id="Q08112">
    <property type="expression patterns" value="baseline and differential"/>
</dbReference>
<dbReference type="GO" id="GO:0022626">
    <property type="term" value="C:cytosolic ribosome"/>
    <property type="evidence" value="ECO:0007005"/>
    <property type="project" value="TAIR"/>
</dbReference>
<dbReference type="GO" id="GO:0022627">
    <property type="term" value="C:cytosolic small ribosomal subunit"/>
    <property type="evidence" value="ECO:0007005"/>
    <property type="project" value="TAIR"/>
</dbReference>
<dbReference type="GO" id="GO:0005576">
    <property type="term" value="C:extracellular region"/>
    <property type="evidence" value="ECO:0007005"/>
    <property type="project" value="TAIR"/>
</dbReference>
<dbReference type="GO" id="GO:0000325">
    <property type="term" value="C:plant-type vacuole"/>
    <property type="evidence" value="ECO:0007005"/>
    <property type="project" value="TAIR"/>
</dbReference>
<dbReference type="GO" id="GO:0009506">
    <property type="term" value="C:plasmodesma"/>
    <property type="evidence" value="ECO:0007005"/>
    <property type="project" value="TAIR"/>
</dbReference>
<dbReference type="GO" id="GO:0003729">
    <property type="term" value="F:mRNA binding"/>
    <property type="evidence" value="ECO:0000314"/>
    <property type="project" value="TAIR"/>
</dbReference>
<dbReference type="GO" id="GO:0003735">
    <property type="term" value="F:structural constituent of ribosome"/>
    <property type="evidence" value="ECO:0000314"/>
    <property type="project" value="CAFA"/>
</dbReference>
<dbReference type="GO" id="GO:0006412">
    <property type="term" value="P:translation"/>
    <property type="evidence" value="ECO:0007669"/>
    <property type="project" value="InterPro"/>
</dbReference>
<dbReference type="FunFam" id="3.30.860.10:FF:000002">
    <property type="entry name" value="40S ribosomal protein S15"/>
    <property type="match status" value="1"/>
</dbReference>
<dbReference type="Gene3D" id="3.30.860.10">
    <property type="entry name" value="30s Ribosomal Protein S19, Chain A"/>
    <property type="match status" value="1"/>
</dbReference>
<dbReference type="HAMAP" id="MF_00531">
    <property type="entry name" value="Ribosomal_uS19"/>
    <property type="match status" value="1"/>
</dbReference>
<dbReference type="InterPro" id="IPR002222">
    <property type="entry name" value="Ribosomal_uS19"/>
</dbReference>
<dbReference type="InterPro" id="IPR020934">
    <property type="entry name" value="Ribosomal_uS19_CS"/>
</dbReference>
<dbReference type="InterPro" id="IPR005713">
    <property type="entry name" value="Ribosomal_uS19_euk/arc"/>
</dbReference>
<dbReference type="InterPro" id="IPR023575">
    <property type="entry name" value="Ribosomal_uS19_SF"/>
</dbReference>
<dbReference type="NCBIfam" id="NF003121">
    <property type="entry name" value="PRK04038.1"/>
    <property type="match status" value="1"/>
</dbReference>
<dbReference type="NCBIfam" id="TIGR01025">
    <property type="entry name" value="uS19_arch"/>
    <property type="match status" value="1"/>
</dbReference>
<dbReference type="PANTHER" id="PTHR11880">
    <property type="entry name" value="RIBOSOMAL PROTEIN S19P FAMILY MEMBER"/>
    <property type="match status" value="1"/>
</dbReference>
<dbReference type="PANTHER" id="PTHR11880:SF53">
    <property type="entry name" value="SMALL RIBOSOMAL SUBUNIT PROTEIN US19U-RELATED"/>
    <property type="match status" value="1"/>
</dbReference>
<dbReference type="Pfam" id="PF00203">
    <property type="entry name" value="Ribosomal_S19"/>
    <property type="match status" value="1"/>
</dbReference>
<dbReference type="PIRSF" id="PIRSF002144">
    <property type="entry name" value="Ribosomal_S19"/>
    <property type="match status" value="1"/>
</dbReference>
<dbReference type="PRINTS" id="PR00975">
    <property type="entry name" value="RIBOSOMALS19"/>
</dbReference>
<dbReference type="SUPFAM" id="SSF54570">
    <property type="entry name" value="Ribosomal protein S19"/>
    <property type="match status" value="1"/>
</dbReference>
<dbReference type="PROSITE" id="PS00323">
    <property type="entry name" value="RIBOSOMAL_S19"/>
    <property type="match status" value="1"/>
</dbReference>
<evidence type="ECO:0000303" key="1">
    <source>
    </source>
</evidence>
<evidence type="ECO:0000305" key="2"/>
<sequence>MADVEPEVAAAGVPKKRTFKKFAFKGVDLDALLDMSTDDLVKLFSSRIRRRFSRGLTRKPMALIKKLRKAKREAPQGEKPEPVRTHLRNMIIVPEMIGSIIGVYNGKTFNQVEIKPEMIGHYLAEFSISYKPVKHGRPGVGATHSSRFIPLK</sequence>
<keyword id="KW-0025">Alternative splicing</keyword>
<keyword id="KW-0963">Cytoplasm</keyword>
<keyword id="KW-1185">Reference proteome</keyword>
<keyword id="KW-0687">Ribonucleoprotein</keyword>
<keyword id="KW-0689">Ribosomal protein</keyword>
<protein>
    <recommendedName>
        <fullName evidence="1">Small ribosomal subunit protein uS19u</fullName>
    </recommendedName>
    <alternativeName>
        <fullName>40S ribosomal protein S15-1</fullName>
    </alternativeName>
</protein>
<reference key="1">
    <citation type="journal article" date="1993" name="Biochim. Biophys. Acta">
        <title>The Arabidopsis thaliana ribosomal protein S15 (rig) gene.</title>
        <authorList>
            <person name="Sangwan V."/>
            <person name="Lenvik T.R."/>
            <person name="Gantt S."/>
        </authorList>
    </citation>
    <scope>NUCLEOTIDE SEQUENCE [GENOMIC DNA / MRNA]</scope>
</reference>
<reference key="2">
    <citation type="submission" date="1995-12" db="EMBL/GenBank/DDBJ databases">
        <authorList>
            <person name="Grellet F."/>
            <person name="Cooke R."/>
            <person name="Laudie M."/>
            <person name="Raynal M."/>
            <person name="Delseny M."/>
        </authorList>
    </citation>
    <scope>NUCLEOTIDE SEQUENCE [MRNA]</scope>
    <source>
        <strain>cv. Columbia</strain>
        <tissue>Silique</tissue>
    </source>
</reference>
<reference key="3">
    <citation type="journal article" date="2000" name="Nature">
        <title>Sequence and analysis of chromosome 1 of the plant Arabidopsis thaliana.</title>
        <authorList>
            <person name="Theologis A."/>
            <person name="Ecker J.R."/>
            <person name="Palm C.J."/>
            <person name="Federspiel N.A."/>
            <person name="Kaul S."/>
            <person name="White O."/>
            <person name="Alonso J."/>
            <person name="Altafi H."/>
            <person name="Araujo R."/>
            <person name="Bowman C.L."/>
            <person name="Brooks S.Y."/>
            <person name="Buehler E."/>
            <person name="Chan A."/>
            <person name="Chao Q."/>
            <person name="Chen H."/>
            <person name="Cheuk R.F."/>
            <person name="Chin C.W."/>
            <person name="Chung M.K."/>
            <person name="Conn L."/>
            <person name="Conway A.B."/>
            <person name="Conway A.R."/>
            <person name="Creasy T.H."/>
            <person name="Dewar K."/>
            <person name="Dunn P."/>
            <person name="Etgu P."/>
            <person name="Feldblyum T.V."/>
            <person name="Feng J.-D."/>
            <person name="Fong B."/>
            <person name="Fujii C.Y."/>
            <person name="Gill J.E."/>
            <person name="Goldsmith A.D."/>
            <person name="Haas B."/>
            <person name="Hansen N.F."/>
            <person name="Hughes B."/>
            <person name="Huizar L."/>
            <person name="Hunter J.L."/>
            <person name="Jenkins J."/>
            <person name="Johnson-Hopson C."/>
            <person name="Khan S."/>
            <person name="Khaykin E."/>
            <person name="Kim C.J."/>
            <person name="Koo H.L."/>
            <person name="Kremenetskaia I."/>
            <person name="Kurtz D.B."/>
            <person name="Kwan A."/>
            <person name="Lam B."/>
            <person name="Langin-Hooper S."/>
            <person name="Lee A."/>
            <person name="Lee J.M."/>
            <person name="Lenz C.A."/>
            <person name="Li J.H."/>
            <person name="Li Y.-P."/>
            <person name="Lin X."/>
            <person name="Liu S.X."/>
            <person name="Liu Z.A."/>
            <person name="Luros J.S."/>
            <person name="Maiti R."/>
            <person name="Marziali A."/>
            <person name="Militscher J."/>
            <person name="Miranda M."/>
            <person name="Nguyen M."/>
            <person name="Nierman W.C."/>
            <person name="Osborne B.I."/>
            <person name="Pai G."/>
            <person name="Peterson J."/>
            <person name="Pham P.K."/>
            <person name="Rizzo M."/>
            <person name="Rooney T."/>
            <person name="Rowley D."/>
            <person name="Sakano H."/>
            <person name="Salzberg S.L."/>
            <person name="Schwartz J.R."/>
            <person name="Shinn P."/>
            <person name="Southwick A.M."/>
            <person name="Sun H."/>
            <person name="Tallon L.J."/>
            <person name="Tambunga G."/>
            <person name="Toriumi M.J."/>
            <person name="Town C.D."/>
            <person name="Utterback T."/>
            <person name="Van Aken S."/>
            <person name="Vaysberg M."/>
            <person name="Vysotskaia V.S."/>
            <person name="Walker M."/>
            <person name="Wu D."/>
            <person name="Yu G."/>
            <person name="Fraser C.M."/>
            <person name="Venter J.C."/>
            <person name="Davis R.W."/>
        </authorList>
    </citation>
    <scope>NUCLEOTIDE SEQUENCE [LARGE SCALE GENOMIC DNA]</scope>
    <source>
        <strain>cv. Columbia</strain>
    </source>
</reference>
<reference key="4">
    <citation type="journal article" date="2017" name="Plant J.">
        <title>Araport11: a complete reannotation of the Arabidopsis thaliana reference genome.</title>
        <authorList>
            <person name="Cheng C.Y."/>
            <person name="Krishnakumar V."/>
            <person name="Chan A.P."/>
            <person name="Thibaud-Nissen F."/>
            <person name="Schobel S."/>
            <person name="Town C.D."/>
        </authorList>
    </citation>
    <scope>GENOME REANNOTATION</scope>
    <source>
        <strain>cv. Columbia</strain>
    </source>
</reference>
<reference key="5">
    <citation type="journal article" date="2003" name="Science">
        <title>Empirical analysis of transcriptional activity in the Arabidopsis genome.</title>
        <authorList>
            <person name="Yamada K."/>
            <person name="Lim J."/>
            <person name="Dale J.M."/>
            <person name="Chen H."/>
            <person name="Shinn P."/>
            <person name="Palm C.J."/>
            <person name="Southwick A.M."/>
            <person name="Wu H.C."/>
            <person name="Kim C.J."/>
            <person name="Nguyen M."/>
            <person name="Pham P.K."/>
            <person name="Cheuk R.F."/>
            <person name="Karlin-Newmann G."/>
            <person name="Liu S.X."/>
            <person name="Lam B."/>
            <person name="Sakano H."/>
            <person name="Wu T."/>
            <person name="Yu G."/>
            <person name="Miranda M."/>
            <person name="Quach H.L."/>
            <person name="Tripp M."/>
            <person name="Chang C.H."/>
            <person name="Lee J.M."/>
            <person name="Toriumi M.J."/>
            <person name="Chan M.M."/>
            <person name="Tang C.C."/>
            <person name="Onodera C.S."/>
            <person name="Deng J.M."/>
            <person name="Akiyama K."/>
            <person name="Ansari Y."/>
            <person name="Arakawa T."/>
            <person name="Banh J."/>
            <person name="Banno F."/>
            <person name="Bowser L."/>
            <person name="Brooks S.Y."/>
            <person name="Carninci P."/>
            <person name="Chao Q."/>
            <person name="Choy N."/>
            <person name="Enju A."/>
            <person name="Goldsmith A.D."/>
            <person name="Gurjal M."/>
            <person name="Hansen N.F."/>
            <person name="Hayashizaki Y."/>
            <person name="Johnson-Hopson C."/>
            <person name="Hsuan V.W."/>
            <person name="Iida K."/>
            <person name="Karnes M."/>
            <person name="Khan S."/>
            <person name="Koesema E."/>
            <person name="Ishida J."/>
            <person name="Jiang P.X."/>
            <person name="Jones T."/>
            <person name="Kawai J."/>
            <person name="Kamiya A."/>
            <person name="Meyers C."/>
            <person name="Nakajima M."/>
            <person name="Narusaka M."/>
            <person name="Seki M."/>
            <person name="Sakurai T."/>
            <person name="Satou M."/>
            <person name="Tamse R."/>
            <person name="Vaysberg M."/>
            <person name="Wallender E.K."/>
            <person name="Wong C."/>
            <person name="Yamamura Y."/>
            <person name="Yuan S."/>
            <person name="Shinozaki K."/>
            <person name="Davis R.W."/>
            <person name="Theologis A."/>
            <person name="Ecker J.R."/>
        </authorList>
    </citation>
    <scope>NUCLEOTIDE SEQUENCE [LARGE SCALE MRNA]</scope>
    <source>
        <strain>cv. Columbia</strain>
    </source>
</reference>
<reference key="6">
    <citation type="journal article" date="1993" name="Plant J.">
        <title>An inventory of 1152 expressed sequence tags obtained by partial sequencing of cDNAs from Arabidopsis thaliana.</title>
        <authorList>
            <person name="Hoefte H."/>
            <person name="Desprez T."/>
            <person name="Amselem J."/>
            <person name="Chiapello H."/>
            <person name="Rouze P."/>
            <person name="Caboche M."/>
            <person name="Moisan A."/>
            <person name="Jourjon M.-F."/>
            <person name="Charpenteau J.-L."/>
            <person name="Berthomieu P."/>
            <person name="Guerrier D."/>
            <person name="Giraudat J."/>
            <person name="Quigley F."/>
            <person name="Thomas F."/>
            <person name="Yu D.-Y."/>
            <person name="Mache R."/>
            <person name="Raynal M."/>
            <person name="Cooke R."/>
            <person name="Grellet F."/>
            <person name="Delseny M."/>
            <person name="Parmentier Y."/>
            <person name="de Marcillac G."/>
            <person name="Gigot C."/>
            <person name="Fleck J."/>
            <person name="Philipps G."/>
            <person name="Axelos M."/>
            <person name="Bardet C."/>
            <person name="Tremousaygue D."/>
            <person name="Lescure B."/>
        </authorList>
    </citation>
    <scope>NUCLEOTIDE SEQUENCE [LARGE SCALE MRNA] OF 105-152</scope>
    <source>
        <strain>cv. Columbia</strain>
        <tissue>Green siliques</tissue>
    </source>
</reference>
<reference key="7">
    <citation type="journal article" date="2001" name="Plant Physiol.">
        <title>The organization of cytoplasmic ribosomal protein genes in the Arabidopsis genome.</title>
        <authorList>
            <person name="Barakat A."/>
            <person name="Szick-Miranda K."/>
            <person name="Chang I.-F."/>
            <person name="Guyot R."/>
            <person name="Blanc G."/>
            <person name="Cooke R."/>
            <person name="Delseny M."/>
            <person name="Bailey-Serres J."/>
        </authorList>
    </citation>
    <scope>GENE FAMILY ORGANIZATION</scope>
    <scope>NOMENCLATURE</scope>
</reference>
<reference key="8">
    <citation type="journal article" date="2023" name="Plant Cell">
        <title>An updated nomenclature for plant ribosomal protein genes.</title>
        <authorList>
            <person name="Scarpin M.R."/>
            <person name="Busche M."/>
            <person name="Martinez R.E."/>
            <person name="Harper L.C."/>
            <person name="Reiser L."/>
            <person name="Szakonyi D."/>
            <person name="Merchante C."/>
            <person name="Lan T."/>
            <person name="Xiong W."/>
            <person name="Mo B."/>
            <person name="Tang G."/>
            <person name="Chen X."/>
            <person name="Bailey-Serres J."/>
            <person name="Browning K.S."/>
            <person name="Brunkard J.O."/>
        </authorList>
    </citation>
    <scope>NOMENCLATURE</scope>
</reference>
<comment type="subcellular location">
    <subcellularLocation>
        <location>Cytoplasm</location>
    </subcellularLocation>
</comment>
<comment type="alternative products">
    <event type="alternative splicing"/>
    <isoform>
        <id>Q08112-1</id>
        <name>1</name>
        <sequence type="displayed"/>
    </isoform>
    <text>A number of isoforms are produced. According to EST sequences.</text>
</comment>
<comment type="similarity">
    <text evidence="2">Belongs to the universal ribosomal protein uS19 family.</text>
</comment>
<gene>
    <name type="primary">RPS15A</name>
    <name type="synonym">RIG</name>
    <name type="synonym">RPS15</name>
    <name type="ordered locus">At1g04270</name>
    <name type="ORF">F19P19.29</name>
</gene>
<accession>Q08112</accession>